<feature type="chain" id="PRO_0000272647" description="Programmed cell death protein 2-like">
    <location>
        <begin position="1"/>
        <end position="379"/>
    </location>
</feature>
<protein>
    <recommendedName>
        <fullName>Programmed cell death protein 2-like</fullName>
    </recommendedName>
</protein>
<gene>
    <name type="primary">PDCD2L</name>
    <name type="ORF">RCJMB04_27n18</name>
</gene>
<dbReference type="EMBL" id="AJ720852">
    <property type="protein sequence ID" value="CAG32511.1"/>
    <property type="molecule type" value="mRNA"/>
</dbReference>
<dbReference type="RefSeq" id="NP_001025743.1">
    <property type="nucleotide sequence ID" value="NM_001030572.1"/>
</dbReference>
<dbReference type="FunCoup" id="Q5ZID2">
    <property type="interactions" value="1505"/>
</dbReference>
<dbReference type="STRING" id="9031.ENSGALP00000028895"/>
<dbReference type="PaxDb" id="9031-ENSGALP00000028895"/>
<dbReference type="GeneID" id="415785"/>
<dbReference type="KEGG" id="gga:415785"/>
<dbReference type="CTD" id="84306"/>
<dbReference type="VEuPathDB" id="HostDB:geneid_415785"/>
<dbReference type="eggNOG" id="KOG2061">
    <property type="taxonomic scope" value="Eukaryota"/>
</dbReference>
<dbReference type="InParanoid" id="Q5ZID2"/>
<dbReference type="OrthoDB" id="366284at2759"/>
<dbReference type="PhylomeDB" id="Q5ZID2"/>
<dbReference type="PRO" id="PR:Q5ZID2"/>
<dbReference type="Proteomes" id="UP000000539">
    <property type="component" value="Unassembled WGS sequence"/>
</dbReference>
<dbReference type="GO" id="GO:0005737">
    <property type="term" value="C:cytoplasm"/>
    <property type="evidence" value="ECO:0007669"/>
    <property type="project" value="InterPro"/>
</dbReference>
<dbReference type="GO" id="GO:0006915">
    <property type="term" value="P:apoptotic process"/>
    <property type="evidence" value="ECO:0000318"/>
    <property type="project" value="GO_Central"/>
</dbReference>
<dbReference type="InterPro" id="IPR052815">
    <property type="entry name" value="PDCD2-like_regulator"/>
</dbReference>
<dbReference type="InterPro" id="IPR007320">
    <property type="entry name" value="PDCD2_C"/>
</dbReference>
<dbReference type="PANTHER" id="PTHR46421">
    <property type="entry name" value="PROGRAMMED CELL DEATH PROTEIN 2-LIKE"/>
    <property type="match status" value="1"/>
</dbReference>
<dbReference type="PANTHER" id="PTHR46421:SF1">
    <property type="entry name" value="PROGRAMMED CELL DEATH PROTEIN 2-LIKE"/>
    <property type="match status" value="1"/>
</dbReference>
<dbReference type="Pfam" id="PF04194">
    <property type="entry name" value="PDCD2_C"/>
    <property type="match status" value="1"/>
</dbReference>
<reference key="1">
    <citation type="journal article" date="2005" name="Genome Biol.">
        <title>Full-length cDNAs from chicken bursal lymphocytes to facilitate gene function analysis.</title>
        <authorList>
            <person name="Caldwell R.B."/>
            <person name="Kierzek A.M."/>
            <person name="Arakawa H."/>
            <person name="Bezzubov Y."/>
            <person name="Zaim J."/>
            <person name="Fiedler P."/>
            <person name="Kutter S."/>
            <person name="Blagodatski A."/>
            <person name="Kostovska D."/>
            <person name="Koter M."/>
            <person name="Plachy J."/>
            <person name="Carninci P."/>
            <person name="Hayashizaki Y."/>
            <person name="Buerstedde J.-M."/>
        </authorList>
    </citation>
    <scope>NUCLEOTIDE SEQUENCE [LARGE SCALE MRNA]</scope>
    <source>
        <strain>CB</strain>
        <tissue>Bursa of Fabricius</tissue>
    </source>
</reference>
<keyword id="KW-1185">Reference proteome</keyword>
<accession>Q5ZID2</accession>
<proteinExistence type="evidence at transcript level"/>
<name>PDD2L_CHICK</name>
<organism>
    <name type="scientific">Gallus gallus</name>
    <name type="common">Chicken</name>
    <dbReference type="NCBI Taxonomy" id="9031"/>
    <lineage>
        <taxon>Eukaryota</taxon>
        <taxon>Metazoa</taxon>
        <taxon>Chordata</taxon>
        <taxon>Craniata</taxon>
        <taxon>Vertebrata</taxon>
        <taxon>Euteleostomi</taxon>
        <taxon>Archelosauria</taxon>
        <taxon>Archosauria</taxon>
        <taxon>Dinosauria</taxon>
        <taxon>Saurischia</taxon>
        <taxon>Theropoda</taxon>
        <taxon>Coelurosauria</taxon>
        <taxon>Aves</taxon>
        <taxon>Neognathae</taxon>
        <taxon>Galloanserae</taxon>
        <taxon>Galliformes</taxon>
        <taxon>Phasianidae</taxon>
        <taxon>Phasianinae</taxon>
        <taxon>Gallus</taxon>
    </lineage>
</organism>
<sequence>MAAAAPPVLRGLRDAAMVGPCRGGGEPPGWATNKLGGRADALPSVRPGCPRCGACGAALAHLVQVYCPLGASPFHRLANVFACAESACWGRPQSWKVLRSQSLEARGQDALGCGSKQKEECNFSAKDWCAEADDWGGCDGTESSTCALQMLGLNAGMSSSASEEAQCVSQLQELHLSEAADVSGSLNTDLLLREEMVMATSAPVFHSYYISVVDEADYAGFLDTDHANKLLKEYQQREGVDLEHLMSESFAGEDSNEKYEKTKVRSGDHTFHKFMKRISVCPEQILRYSWGGQPLFITCPPANFDNSIPACSNCGSNRVFEFQLMPALVSMLWGDADLSVEFGTVIVYTCERSCWPTNQQTPLEEFIFVQEDPDQKLFK</sequence>